<gene>
    <name evidence="1" type="primary">mfnA</name>
    <name type="ordered locus">rrnAC1798</name>
</gene>
<dbReference type="EC" id="4.1.1.11" evidence="1"/>
<dbReference type="EMBL" id="AY596297">
    <property type="protein sequence ID" value="AAV46689.1"/>
    <property type="molecule type" value="Genomic_DNA"/>
</dbReference>
<dbReference type="RefSeq" id="WP_007188823.1">
    <property type="nucleotide sequence ID" value="NZ_CP039138.1"/>
</dbReference>
<dbReference type="SMR" id="Q5V1B4"/>
<dbReference type="STRING" id="272569.rrnAC1798"/>
<dbReference type="PaxDb" id="272569-rrnAC1798"/>
<dbReference type="EnsemblBacteria" id="AAV46689">
    <property type="protein sequence ID" value="AAV46689"/>
    <property type="gene ID" value="rrnAC1798"/>
</dbReference>
<dbReference type="GeneID" id="40152742"/>
<dbReference type="KEGG" id="hma:rrnAC1798"/>
<dbReference type="PATRIC" id="fig|272569.17.peg.2470"/>
<dbReference type="eggNOG" id="arCOG00027">
    <property type="taxonomic scope" value="Archaea"/>
</dbReference>
<dbReference type="HOGENOM" id="CLU_028929_2_1_2"/>
<dbReference type="UniPathway" id="UPA00241"/>
<dbReference type="Proteomes" id="UP000001169">
    <property type="component" value="Chromosome I"/>
</dbReference>
<dbReference type="GO" id="GO:0004068">
    <property type="term" value="F:aspartate 1-decarboxylase activity"/>
    <property type="evidence" value="ECO:0007669"/>
    <property type="project" value="UniProtKB-UniRule"/>
</dbReference>
<dbReference type="GO" id="GO:0030170">
    <property type="term" value="F:pyridoxal phosphate binding"/>
    <property type="evidence" value="ECO:0007669"/>
    <property type="project" value="UniProtKB-UniRule"/>
</dbReference>
<dbReference type="GO" id="GO:0019752">
    <property type="term" value="P:carboxylic acid metabolic process"/>
    <property type="evidence" value="ECO:0007669"/>
    <property type="project" value="InterPro"/>
</dbReference>
<dbReference type="GO" id="GO:0015937">
    <property type="term" value="P:coenzyme A biosynthetic process"/>
    <property type="evidence" value="ECO:0007669"/>
    <property type="project" value="UniProtKB-UniRule"/>
</dbReference>
<dbReference type="Gene3D" id="3.90.1150.10">
    <property type="entry name" value="Aspartate Aminotransferase, domain 1"/>
    <property type="match status" value="1"/>
</dbReference>
<dbReference type="Gene3D" id="3.40.640.10">
    <property type="entry name" value="Type I PLP-dependent aspartate aminotransferase-like (Major domain)"/>
    <property type="match status" value="1"/>
</dbReference>
<dbReference type="HAMAP" id="MF_01610">
    <property type="entry name" value="MfnA_decarbox"/>
    <property type="match status" value="1"/>
</dbReference>
<dbReference type="InterPro" id="IPR050477">
    <property type="entry name" value="GrpII_AminoAcid_Decarb"/>
</dbReference>
<dbReference type="InterPro" id="IPR020931">
    <property type="entry name" value="MfnA"/>
</dbReference>
<dbReference type="InterPro" id="IPR002129">
    <property type="entry name" value="PyrdxlP-dep_de-COase"/>
</dbReference>
<dbReference type="InterPro" id="IPR015424">
    <property type="entry name" value="PyrdxlP-dep_Trfase"/>
</dbReference>
<dbReference type="InterPro" id="IPR015421">
    <property type="entry name" value="PyrdxlP-dep_Trfase_major"/>
</dbReference>
<dbReference type="InterPro" id="IPR015422">
    <property type="entry name" value="PyrdxlP-dep_Trfase_small"/>
</dbReference>
<dbReference type="NCBIfam" id="TIGR03812">
    <property type="entry name" value="tyr_de_CO2_Arch"/>
    <property type="match status" value="1"/>
</dbReference>
<dbReference type="PANTHER" id="PTHR42735">
    <property type="match status" value="1"/>
</dbReference>
<dbReference type="PANTHER" id="PTHR42735:SF6">
    <property type="entry name" value="SPHINGOSINE-1-PHOSPHATE LYASE 1"/>
    <property type="match status" value="1"/>
</dbReference>
<dbReference type="Pfam" id="PF00282">
    <property type="entry name" value="Pyridoxal_deC"/>
    <property type="match status" value="1"/>
</dbReference>
<dbReference type="SUPFAM" id="SSF53383">
    <property type="entry name" value="PLP-dependent transferases"/>
    <property type="match status" value="1"/>
</dbReference>
<sequence>MLQRAEPQDFERVLSSMCTVPHPSAREAAERFLATNPGDPGTYETIAGLEREAVEYLGDITGLSDPAGYVASGGTEANLQAIRIARNRADTDDPNVVAPVHAHFSFTKAADVLGVELRTAPAADYRVNMAAMAELVDEDTVCVVGVAGSTEYGYVDPIPAIADLAETVDALCHVDAAWGGFYLPFTDHDWHFGHADIDTMTIDPHKVGQAAVPAGGLLARDRTLLDELAVETPYLESTDQLTLTGTRSGAGVASAVAAMESLWPAGYRQQYETSMANADWLADQLSARGHDVVGPELPLVAADLSMPMTDELRDRGWRVSKTGAGEMRVVCMPHVTRSMLRSFVADLDWY</sequence>
<protein>
    <recommendedName>
        <fullName evidence="1">Probable L-aspartate decarboxylase</fullName>
        <shortName evidence="1">ADC</shortName>
        <ecNumber evidence="1">4.1.1.11</ecNumber>
    </recommendedName>
</protein>
<feature type="chain" id="PRO_0000147020" description="Probable L-aspartate decarboxylase">
    <location>
        <begin position="1"/>
        <end position="350"/>
    </location>
</feature>
<feature type="modified residue" description="N6-(pyridoxal phosphate)lysine" evidence="1">
    <location>
        <position position="206"/>
    </location>
</feature>
<reference key="1">
    <citation type="journal article" date="2004" name="Genome Res.">
        <title>Genome sequence of Haloarcula marismortui: a halophilic archaeon from the Dead Sea.</title>
        <authorList>
            <person name="Baliga N.S."/>
            <person name="Bonneau R."/>
            <person name="Facciotti M.T."/>
            <person name="Pan M."/>
            <person name="Glusman G."/>
            <person name="Deutsch E.W."/>
            <person name="Shannon P."/>
            <person name="Chiu Y."/>
            <person name="Weng R.S."/>
            <person name="Gan R.R."/>
            <person name="Hung P."/>
            <person name="Date S.V."/>
            <person name="Marcotte E."/>
            <person name="Hood L."/>
            <person name="Ng W.V."/>
        </authorList>
    </citation>
    <scope>NUCLEOTIDE SEQUENCE [LARGE SCALE GENOMIC DNA]</scope>
    <source>
        <strain>ATCC 43049 / DSM 3752 / JCM 8966 / VKM B-1809</strain>
    </source>
</reference>
<organism>
    <name type="scientific">Haloarcula marismortui (strain ATCC 43049 / DSM 3752 / JCM 8966 / VKM B-1809)</name>
    <name type="common">Halobacterium marismortui</name>
    <dbReference type="NCBI Taxonomy" id="272569"/>
    <lineage>
        <taxon>Archaea</taxon>
        <taxon>Methanobacteriati</taxon>
        <taxon>Methanobacteriota</taxon>
        <taxon>Stenosarchaea group</taxon>
        <taxon>Halobacteria</taxon>
        <taxon>Halobacteriales</taxon>
        <taxon>Haloarculaceae</taxon>
        <taxon>Haloarcula</taxon>
    </lineage>
</organism>
<name>MFNA_HALMA</name>
<keyword id="KW-0210">Decarboxylase</keyword>
<keyword id="KW-0456">Lyase</keyword>
<keyword id="KW-0663">Pyridoxal phosphate</keyword>
<keyword id="KW-1185">Reference proteome</keyword>
<comment type="function">
    <text evidence="1">Catalyzes the decarboxylation of L-aspartate to produce beta-alanine.</text>
</comment>
<comment type="catalytic activity">
    <reaction evidence="1">
        <text>L-aspartate + H(+) = beta-alanine + CO2</text>
        <dbReference type="Rhea" id="RHEA:19497"/>
        <dbReference type="ChEBI" id="CHEBI:15378"/>
        <dbReference type="ChEBI" id="CHEBI:16526"/>
        <dbReference type="ChEBI" id="CHEBI:29991"/>
        <dbReference type="ChEBI" id="CHEBI:57966"/>
        <dbReference type="EC" id="4.1.1.11"/>
    </reaction>
</comment>
<comment type="cofactor">
    <cofactor evidence="1">
        <name>pyridoxal 5'-phosphate</name>
        <dbReference type="ChEBI" id="CHEBI:597326"/>
    </cofactor>
</comment>
<comment type="pathway">
    <text evidence="1">Cofactor biosynthesis; coenzyme A biosynthesis.</text>
</comment>
<comment type="similarity">
    <text evidence="1">Belongs to the group II decarboxylase family. MfnA subfamily.</text>
</comment>
<evidence type="ECO:0000255" key="1">
    <source>
        <dbReference type="HAMAP-Rule" id="MF_01610"/>
    </source>
</evidence>
<proteinExistence type="inferred from homology"/>
<accession>Q5V1B4</accession>